<dbReference type="EC" id="1.3.8.-" evidence="3"/>
<dbReference type="EMBL" id="AJ608287">
    <property type="protein sequence ID" value="CAE55233.1"/>
    <property type="molecule type" value="mRNA"/>
</dbReference>
<dbReference type="EMBL" id="AL833721">
    <property type="protein sequence ID" value="CAH56228.1"/>
    <property type="molecule type" value="mRNA"/>
</dbReference>
<dbReference type="EMBL" id="AL832873">
    <property type="protein sequence ID" value="CAH56354.1"/>
    <property type="molecule type" value="mRNA"/>
</dbReference>
<dbReference type="EMBL" id="AK022654">
    <property type="protein sequence ID" value="BAB14158.1"/>
    <property type="status" value="ALT_INIT"/>
    <property type="molecule type" value="mRNA"/>
</dbReference>
<dbReference type="EMBL" id="AK131265">
    <property type="protein sequence ID" value="BAD18443.1"/>
    <property type="molecule type" value="mRNA"/>
</dbReference>
<dbReference type="EMBL" id="AC020632">
    <property type="status" value="NOT_ANNOTATED_CDS"/>
    <property type="molecule type" value="Genomic_DNA"/>
</dbReference>
<dbReference type="EMBL" id="KF457683">
    <property type="status" value="NOT_ANNOTATED_CDS"/>
    <property type="molecule type" value="Genomic_DNA"/>
</dbReference>
<dbReference type="EMBL" id="KF457684">
    <property type="status" value="NOT_ANNOTATED_CDS"/>
    <property type="molecule type" value="Genomic_DNA"/>
</dbReference>
<dbReference type="EMBL" id="BC019607">
    <property type="protein sequence ID" value="AAH19607.2"/>
    <property type="molecule type" value="mRNA"/>
</dbReference>
<dbReference type="EMBL" id="BC125204">
    <property type="protein sequence ID" value="AAI25205.1"/>
    <property type="molecule type" value="mRNA"/>
</dbReference>
<dbReference type="CCDS" id="CCDS3074.1">
    <molecule id="Q709F0-1"/>
</dbReference>
<dbReference type="RefSeq" id="NP_115545.3">
    <molecule id="Q709F0-1"/>
    <property type="nucleotide sequence ID" value="NM_032169.4"/>
</dbReference>
<dbReference type="PDB" id="2WBI">
    <property type="method" value="X-ray"/>
    <property type="resolution" value="2.80 A"/>
    <property type="chains" value="A/B=355-780"/>
</dbReference>
<dbReference type="PDBsum" id="2WBI"/>
<dbReference type="SMR" id="Q709F0"/>
<dbReference type="BioGRID" id="123902">
    <property type="interactions" value="167"/>
</dbReference>
<dbReference type="FunCoup" id="Q709F0">
    <property type="interactions" value="1440"/>
</dbReference>
<dbReference type="IntAct" id="Q709F0">
    <property type="interactions" value="92"/>
</dbReference>
<dbReference type="MINT" id="Q709F0"/>
<dbReference type="STRING" id="9606.ENSP00000264990"/>
<dbReference type="ChEMBL" id="CHEMBL4105707"/>
<dbReference type="DrugCentral" id="Q709F0"/>
<dbReference type="SwissLipids" id="SLP:000001326"/>
<dbReference type="GlyGen" id="Q709F0">
    <property type="glycosylation" value="1 site, 1 O-linked glycan (1 site)"/>
</dbReference>
<dbReference type="iPTMnet" id="Q709F0"/>
<dbReference type="PhosphoSitePlus" id="Q709F0"/>
<dbReference type="BioMuta" id="ACAD11"/>
<dbReference type="DMDM" id="117949774"/>
<dbReference type="jPOST" id="Q709F0"/>
<dbReference type="MassIVE" id="Q709F0"/>
<dbReference type="PaxDb" id="9606-ENSP00000264990"/>
<dbReference type="PeptideAtlas" id="Q709F0"/>
<dbReference type="ProteomicsDB" id="68516">
    <molecule id="Q709F0-1"/>
</dbReference>
<dbReference type="ProteomicsDB" id="68517">
    <molecule id="Q709F0-2"/>
</dbReference>
<dbReference type="ProteomicsDB" id="68518">
    <molecule id="Q709F0-3"/>
</dbReference>
<dbReference type="Pumba" id="Q709F0"/>
<dbReference type="Antibodypedia" id="34898">
    <property type="antibodies" value="104 antibodies from 21 providers"/>
</dbReference>
<dbReference type="DNASU" id="84129"/>
<dbReference type="Ensembl" id="ENST00000264990.11">
    <molecule id="Q709F0-1"/>
    <property type="protein sequence ID" value="ENSP00000264990.6"/>
    <property type="gene ID" value="ENSG00000240303.8"/>
</dbReference>
<dbReference type="GeneID" id="84129"/>
<dbReference type="KEGG" id="hsa:84129"/>
<dbReference type="MANE-Select" id="ENST00000264990.11">
    <property type="protein sequence ID" value="ENSP00000264990.6"/>
    <property type="RefSeq nucleotide sequence ID" value="NM_032169.5"/>
    <property type="RefSeq protein sequence ID" value="NP_115545.3"/>
</dbReference>
<dbReference type="UCSC" id="uc003eov.5">
    <molecule id="Q709F0-1"/>
    <property type="organism name" value="human"/>
</dbReference>
<dbReference type="AGR" id="HGNC:30211"/>
<dbReference type="CTD" id="84129"/>
<dbReference type="DisGeNET" id="84129"/>
<dbReference type="GeneCards" id="ACAD11"/>
<dbReference type="HGNC" id="HGNC:30211">
    <property type="gene designation" value="ACAD11"/>
</dbReference>
<dbReference type="HPA" id="ENSG00000240303">
    <property type="expression patterns" value="Group enriched (choroid plexus, kidney, liver)"/>
</dbReference>
<dbReference type="MalaCards" id="ACAD11"/>
<dbReference type="MIM" id="614288">
    <property type="type" value="gene"/>
</dbReference>
<dbReference type="neXtProt" id="NX_Q709F0"/>
<dbReference type="OpenTargets" id="ENSG00000240303"/>
<dbReference type="PharmGKB" id="PA142672658"/>
<dbReference type="VEuPathDB" id="HostDB:ENSG00000240303"/>
<dbReference type="eggNOG" id="KOG1469">
    <property type="taxonomic scope" value="Eukaryota"/>
</dbReference>
<dbReference type="GeneTree" id="ENSGT00940000160993"/>
<dbReference type="HOGENOM" id="CLU_007526_3_1_1"/>
<dbReference type="InParanoid" id="Q709F0"/>
<dbReference type="OMA" id="LHGGHFE"/>
<dbReference type="OrthoDB" id="434771at2759"/>
<dbReference type="PAN-GO" id="Q709F0">
    <property type="GO annotations" value="4 GO annotations based on evolutionary models"/>
</dbReference>
<dbReference type="PhylomeDB" id="Q709F0"/>
<dbReference type="TreeFam" id="TF333953"/>
<dbReference type="PathwayCommons" id="Q709F0"/>
<dbReference type="Reactome" id="R-HSA-77289">
    <property type="pathway name" value="Mitochondrial Fatty Acid Beta-Oxidation"/>
</dbReference>
<dbReference type="SignaLink" id="Q709F0"/>
<dbReference type="UniPathway" id="UPA00659"/>
<dbReference type="BioGRID-ORCS" id="84129">
    <property type="hits" value="12 hits in 1161 CRISPR screens"/>
</dbReference>
<dbReference type="EvolutionaryTrace" id="Q709F0"/>
<dbReference type="GenomeRNAi" id="84129"/>
<dbReference type="Pharos" id="Q709F0">
    <property type="development level" value="Tbio"/>
</dbReference>
<dbReference type="PRO" id="PR:Q709F0"/>
<dbReference type="Proteomes" id="UP000005640">
    <property type="component" value="Chromosome 3"/>
</dbReference>
<dbReference type="RNAct" id="Q709F0">
    <property type="molecule type" value="protein"/>
</dbReference>
<dbReference type="Bgee" id="ENSG00000240303">
    <property type="expression patterns" value="Expressed in right lobe of liver and 96 other cell types or tissues"/>
</dbReference>
<dbReference type="ExpressionAtlas" id="Q709F0">
    <property type="expression patterns" value="baseline and differential"/>
</dbReference>
<dbReference type="GO" id="GO:0005737">
    <property type="term" value="C:cytoplasm"/>
    <property type="evidence" value="ECO:0000318"/>
    <property type="project" value="GO_Central"/>
</dbReference>
<dbReference type="GO" id="GO:0005743">
    <property type="term" value="C:mitochondrial inner membrane"/>
    <property type="evidence" value="ECO:0000304"/>
    <property type="project" value="Reactome"/>
</dbReference>
<dbReference type="GO" id="GO:0031966">
    <property type="term" value="C:mitochondrial membrane"/>
    <property type="evidence" value="ECO:0000314"/>
    <property type="project" value="UniProtKB"/>
</dbReference>
<dbReference type="GO" id="GO:0005739">
    <property type="term" value="C:mitochondrion"/>
    <property type="evidence" value="ECO:0000318"/>
    <property type="project" value="GO_Central"/>
</dbReference>
<dbReference type="GO" id="GO:0005634">
    <property type="term" value="C:nucleus"/>
    <property type="evidence" value="ECO:0000314"/>
    <property type="project" value="UniProtKB"/>
</dbReference>
<dbReference type="GO" id="GO:0005777">
    <property type="term" value="C:peroxisome"/>
    <property type="evidence" value="ECO:0000250"/>
    <property type="project" value="HGNC"/>
</dbReference>
<dbReference type="GO" id="GO:0003995">
    <property type="term" value="F:acyl-CoA dehydrogenase activity"/>
    <property type="evidence" value="ECO:0000318"/>
    <property type="project" value="GO_Central"/>
</dbReference>
<dbReference type="GO" id="GO:0050660">
    <property type="term" value="F:flavin adenine dinucleotide binding"/>
    <property type="evidence" value="ECO:0007669"/>
    <property type="project" value="InterPro"/>
</dbReference>
<dbReference type="GO" id="GO:0004466">
    <property type="term" value="F:long-chain fatty acyl-CoA dehydrogenase activity"/>
    <property type="evidence" value="ECO:0000314"/>
    <property type="project" value="UniProtKB"/>
</dbReference>
<dbReference type="GO" id="GO:0070991">
    <property type="term" value="F:medium-chain fatty acyl-CoA dehydrogenase activity"/>
    <property type="evidence" value="ECO:0000314"/>
    <property type="project" value="UniProtKB"/>
</dbReference>
<dbReference type="GO" id="GO:0017099">
    <property type="term" value="F:very-long-chain fatty acyl-CoA dehydrogenase activity"/>
    <property type="evidence" value="ECO:0000314"/>
    <property type="project" value="UniProtKB"/>
</dbReference>
<dbReference type="GO" id="GO:0006635">
    <property type="term" value="P:fatty acid beta-oxidation"/>
    <property type="evidence" value="ECO:0000304"/>
    <property type="project" value="Reactome"/>
</dbReference>
<dbReference type="GO" id="GO:0033539">
    <property type="term" value="P:fatty acid beta-oxidation using acyl-CoA dehydrogenase"/>
    <property type="evidence" value="ECO:0000314"/>
    <property type="project" value="UniProtKB"/>
</dbReference>
<dbReference type="CDD" id="cd05154">
    <property type="entry name" value="ACAD10_11_N-like"/>
    <property type="match status" value="1"/>
</dbReference>
<dbReference type="CDD" id="cd01155">
    <property type="entry name" value="ACAD_FadE2"/>
    <property type="match status" value="1"/>
</dbReference>
<dbReference type="FunFam" id="2.40.110.10:FF:000002">
    <property type="entry name" value="Acyl-CoA dehydrogenase fadE12"/>
    <property type="match status" value="1"/>
</dbReference>
<dbReference type="FunFam" id="1.20.140.10:FF:000018">
    <property type="entry name" value="Acyl-CoA dehydrogenase family member 10"/>
    <property type="match status" value="1"/>
</dbReference>
<dbReference type="FunFam" id="3.30.200.20:FF:000343">
    <property type="entry name" value="Acyl-CoA dehydrogenase family member 10"/>
    <property type="match status" value="1"/>
</dbReference>
<dbReference type="FunFam" id="3.90.1200.10:FF:000009">
    <property type="entry name" value="Acyl-CoA dehydrogenase family member 11"/>
    <property type="match status" value="1"/>
</dbReference>
<dbReference type="FunFam" id="1.10.540.10:FF:000016">
    <property type="entry name" value="acyl-CoA dehydrogenase family member 11"/>
    <property type="match status" value="1"/>
</dbReference>
<dbReference type="Gene3D" id="3.90.1200.10">
    <property type="match status" value="1"/>
</dbReference>
<dbReference type="Gene3D" id="1.10.540.10">
    <property type="entry name" value="Acyl-CoA dehydrogenase/oxidase, N-terminal domain"/>
    <property type="match status" value="1"/>
</dbReference>
<dbReference type="Gene3D" id="2.40.110.10">
    <property type="entry name" value="Butyryl-CoA Dehydrogenase, subunit A, domain 2"/>
    <property type="match status" value="1"/>
</dbReference>
<dbReference type="Gene3D" id="1.20.140.10">
    <property type="entry name" value="Butyryl-CoA Dehydrogenase, subunit A, domain 3"/>
    <property type="match status" value="1"/>
</dbReference>
<dbReference type="Gene3D" id="3.30.200.20">
    <property type="entry name" value="Phosphorylase Kinase, domain 1"/>
    <property type="match status" value="1"/>
</dbReference>
<dbReference type="InterPro" id="IPR041726">
    <property type="entry name" value="ACAD10_11_N"/>
</dbReference>
<dbReference type="InterPro" id="IPR050741">
    <property type="entry name" value="Acyl-CoA_dehydrogenase"/>
</dbReference>
<dbReference type="InterPro" id="IPR006091">
    <property type="entry name" value="Acyl-CoA_Oxase/DH_mid-dom"/>
</dbReference>
<dbReference type="InterPro" id="IPR046373">
    <property type="entry name" value="Acyl-CoA_Oxase/DH_mid-dom_sf"/>
</dbReference>
<dbReference type="InterPro" id="IPR036250">
    <property type="entry name" value="AcylCo_DH-like_C"/>
</dbReference>
<dbReference type="InterPro" id="IPR009075">
    <property type="entry name" value="AcylCo_DH/oxidase_C"/>
</dbReference>
<dbReference type="InterPro" id="IPR013786">
    <property type="entry name" value="AcylCoA_DH/ox_N"/>
</dbReference>
<dbReference type="InterPro" id="IPR037069">
    <property type="entry name" value="AcylCoA_DH/ox_N_sf"/>
</dbReference>
<dbReference type="InterPro" id="IPR009100">
    <property type="entry name" value="AcylCoA_DH/oxidase_NM_dom_sf"/>
</dbReference>
<dbReference type="InterPro" id="IPR002575">
    <property type="entry name" value="Aminoglycoside_PTrfase"/>
</dbReference>
<dbReference type="InterPro" id="IPR011009">
    <property type="entry name" value="Kinase-like_dom_sf"/>
</dbReference>
<dbReference type="PANTHER" id="PTHR48083:SF13">
    <property type="entry name" value="ACYL-COA DEHYDROGENASE FAMILY MEMBER 11"/>
    <property type="match status" value="1"/>
</dbReference>
<dbReference type="PANTHER" id="PTHR48083">
    <property type="entry name" value="MEDIUM-CHAIN SPECIFIC ACYL-COA DEHYDROGENASE, MITOCHONDRIAL-RELATED"/>
    <property type="match status" value="1"/>
</dbReference>
<dbReference type="Pfam" id="PF00441">
    <property type="entry name" value="Acyl-CoA_dh_1"/>
    <property type="match status" value="1"/>
</dbReference>
<dbReference type="Pfam" id="PF02770">
    <property type="entry name" value="Acyl-CoA_dh_M"/>
    <property type="match status" value="1"/>
</dbReference>
<dbReference type="Pfam" id="PF02771">
    <property type="entry name" value="Acyl-CoA_dh_N"/>
    <property type="match status" value="1"/>
</dbReference>
<dbReference type="Pfam" id="PF01636">
    <property type="entry name" value="APH"/>
    <property type="match status" value="1"/>
</dbReference>
<dbReference type="SUPFAM" id="SSF47203">
    <property type="entry name" value="Acyl-CoA dehydrogenase C-terminal domain-like"/>
    <property type="match status" value="1"/>
</dbReference>
<dbReference type="SUPFAM" id="SSF56645">
    <property type="entry name" value="Acyl-CoA dehydrogenase NM domain-like"/>
    <property type="match status" value="1"/>
</dbReference>
<dbReference type="SUPFAM" id="SSF56112">
    <property type="entry name" value="Protein kinase-like (PK-like)"/>
    <property type="match status" value="1"/>
</dbReference>
<proteinExistence type="evidence at protein level"/>
<gene>
    <name type="primary">ACAD11</name>
</gene>
<keyword id="KW-0002">3D-structure</keyword>
<keyword id="KW-0007">Acetylation</keyword>
<keyword id="KW-0025">Alternative splicing</keyword>
<keyword id="KW-0274">FAD</keyword>
<keyword id="KW-0276">Fatty acid metabolism</keyword>
<keyword id="KW-0285">Flavoprotein</keyword>
<keyword id="KW-0443">Lipid metabolism</keyword>
<keyword id="KW-0472">Membrane</keyword>
<keyword id="KW-0496">Mitochondrion</keyword>
<keyword id="KW-0560">Oxidoreductase</keyword>
<keyword id="KW-0576">Peroxisome</keyword>
<keyword id="KW-0597">Phosphoprotein</keyword>
<keyword id="KW-1267">Proteomics identification</keyword>
<keyword id="KW-1185">Reference proteome</keyword>
<feature type="chain" id="PRO_0000254145" description="Acyl-CoA dehydrogenase family member 11">
    <location>
        <begin position="1"/>
        <end position="780"/>
    </location>
</feature>
<feature type="binding site" description="in other chain" evidence="4">
    <location>
        <begin position="504"/>
        <end position="514"/>
    </location>
    <ligand>
        <name>FAD</name>
        <dbReference type="ChEBI" id="CHEBI:57692"/>
        <note>ligand shared between dimeric partners</note>
    </ligand>
</feature>
<feature type="binding site" evidence="1">
    <location>
        <position position="514"/>
    </location>
    <ligand>
        <name>substrate</name>
    </ligand>
</feature>
<feature type="binding site" description="in other chain" evidence="4">
    <location>
        <begin position="538"/>
        <end position="540"/>
    </location>
    <ligand>
        <name>FAD</name>
        <dbReference type="ChEBI" id="CHEBI:57692"/>
        <note>ligand shared between dimeric partners</note>
    </ligand>
</feature>
<feature type="binding site" evidence="1">
    <location>
        <begin position="629"/>
        <end position="632"/>
    </location>
    <ligand>
        <name>substrate</name>
    </ligand>
</feature>
<feature type="binding site" evidence="4">
    <location>
        <position position="657"/>
    </location>
    <ligand>
        <name>FAD</name>
        <dbReference type="ChEBI" id="CHEBI:57692"/>
        <note>ligand shared between dimeric partners</note>
    </ligand>
</feature>
<feature type="binding site" evidence="4">
    <location>
        <begin position="727"/>
        <end position="731"/>
    </location>
    <ligand>
        <name>FAD</name>
        <dbReference type="ChEBI" id="CHEBI:57692"/>
        <note>ligand shared between dimeric partners</note>
    </ligand>
</feature>
<feature type="binding site" description="in other chain" evidence="4">
    <location>
        <position position="727"/>
    </location>
    <ligand>
        <name>FAD</name>
        <dbReference type="ChEBI" id="CHEBI:57692"/>
        <note>ligand shared between dimeric partners</note>
    </ligand>
</feature>
<feature type="binding site">
    <location>
        <position position="755"/>
    </location>
    <ligand>
        <name>substrate</name>
    </ligand>
</feature>
<feature type="binding site" description="in other chain" evidence="4">
    <location>
        <begin position="756"/>
        <end position="758"/>
    </location>
    <ligand>
        <name>FAD</name>
        <dbReference type="ChEBI" id="CHEBI:57692"/>
        <note>ligand shared between dimeric partners</note>
    </ligand>
</feature>
<feature type="modified residue" description="N6-acetyllysine" evidence="2">
    <location>
        <position position="177"/>
    </location>
</feature>
<feature type="modified residue" description="Phosphotyrosine" evidence="2">
    <location>
        <position position="324"/>
    </location>
</feature>
<feature type="modified residue" description="N6-succinyllysine" evidence="2">
    <location>
        <position position="391"/>
    </location>
</feature>
<feature type="splice variant" id="VSP_021187" description="In isoform 3." evidence="5">
    <location>
        <begin position="1"/>
        <end position="120"/>
    </location>
</feature>
<feature type="splice variant" id="VSP_021188" description="In isoform 2." evidence="6">
    <location>
        <begin position="564"/>
        <end position="667"/>
    </location>
</feature>
<feature type="sequence variant" id="VAR_028826" description="In dbSNP:rs6776576.">
    <original>V</original>
    <variation>L</variation>
    <location>
        <position position="362"/>
    </location>
</feature>
<feature type="sequence conflict" description="In Ref. 2; CAH56354." evidence="7" ref="2">
    <original>K</original>
    <variation>T</variation>
    <location>
        <position position="414"/>
    </location>
</feature>
<feature type="sequence conflict" description="In Ref. 1; CAE55233 and 3; BAB14158." evidence="7" ref="1 3">
    <original>I</original>
    <variation>V</variation>
    <location>
        <position position="549"/>
    </location>
</feature>
<feature type="sequence conflict" description="In Ref. 2; CAH56228." evidence="7" ref="2">
    <original>S</original>
    <variation>SRLT</variation>
    <location>
        <position position="562"/>
    </location>
</feature>
<feature type="helix" evidence="9">
    <location>
        <begin position="377"/>
        <end position="392"/>
    </location>
</feature>
<feature type="helix" evidence="9">
    <location>
        <begin position="394"/>
        <end position="402"/>
    </location>
</feature>
<feature type="helix" evidence="9">
    <location>
        <begin position="404"/>
        <end position="408"/>
    </location>
</feature>
<feature type="helix" evidence="9">
    <location>
        <begin position="419"/>
        <end position="430"/>
    </location>
</feature>
<feature type="helix" evidence="9">
    <location>
        <begin position="439"/>
        <end position="442"/>
    </location>
</feature>
<feature type="helix" evidence="9">
    <location>
        <begin position="446"/>
        <end position="456"/>
    </location>
</feature>
<feature type="helix" evidence="9">
    <location>
        <begin position="462"/>
        <end position="465"/>
    </location>
</feature>
<feature type="helix" evidence="9">
    <location>
        <begin position="472"/>
        <end position="482"/>
    </location>
</feature>
<feature type="helix" evidence="9">
    <location>
        <begin position="485"/>
        <end position="490"/>
    </location>
</feature>
<feature type="helix" evidence="9">
    <location>
        <begin position="492"/>
        <end position="497"/>
    </location>
</feature>
<feature type="strand" evidence="9">
    <location>
        <begin position="499"/>
        <end position="505"/>
    </location>
</feature>
<feature type="helix" evidence="9">
    <location>
        <begin position="516"/>
        <end position="518"/>
    </location>
</feature>
<feature type="strand" evidence="9">
    <location>
        <begin position="522"/>
        <end position="526"/>
    </location>
</feature>
<feature type="strand" evidence="9">
    <location>
        <begin position="529"/>
        <end position="540"/>
    </location>
</feature>
<feature type="turn" evidence="9">
    <location>
        <begin position="541"/>
        <end position="543"/>
    </location>
</feature>
<feature type="strand" evidence="9">
    <location>
        <begin position="547"/>
        <end position="555"/>
    </location>
</feature>
<feature type="helix" evidence="9">
    <location>
        <begin position="563"/>
        <end position="565"/>
    </location>
</feature>
<feature type="strand" evidence="9">
    <location>
        <begin position="567"/>
        <end position="573"/>
    </location>
</feature>
<feature type="strand" evidence="9">
    <location>
        <begin position="579"/>
        <end position="584"/>
    </location>
</feature>
<feature type="helix" evidence="9">
    <location>
        <begin position="593"/>
        <end position="595"/>
    </location>
</feature>
<feature type="strand" evidence="9">
    <location>
        <begin position="598"/>
        <end position="609"/>
    </location>
</feature>
<feature type="helix" evidence="9">
    <location>
        <begin position="610"/>
        <end position="612"/>
    </location>
</feature>
<feature type="helix" evidence="9">
    <location>
        <begin position="620"/>
        <end position="656"/>
    </location>
</feature>
<feature type="helix" evidence="9">
    <location>
        <begin position="664"/>
        <end position="666"/>
    </location>
</feature>
<feature type="helix" evidence="9">
    <location>
        <begin position="668"/>
        <end position="702"/>
    </location>
</feature>
<feature type="helix" evidence="9">
    <location>
        <begin position="704"/>
        <end position="728"/>
    </location>
</feature>
<feature type="helix" evidence="9">
    <location>
        <begin position="730"/>
        <end position="734"/>
    </location>
</feature>
<feature type="helix" evidence="9">
    <location>
        <begin position="740"/>
        <end position="750"/>
    </location>
</feature>
<feature type="turn" evidence="9">
    <location>
        <begin position="751"/>
        <end position="754"/>
    </location>
</feature>
<feature type="helix" evidence="9">
    <location>
        <begin position="757"/>
        <end position="776"/>
    </location>
</feature>
<name>ACD11_HUMAN</name>
<evidence type="ECO:0000250" key="1"/>
<evidence type="ECO:0000250" key="2">
    <source>
        <dbReference type="UniProtKB" id="Q80XL6"/>
    </source>
</evidence>
<evidence type="ECO:0000269" key="3">
    <source>
    </source>
</evidence>
<evidence type="ECO:0000269" key="4">
    <source ref="9"/>
</evidence>
<evidence type="ECO:0000303" key="5">
    <source>
    </source>
</evidence>
<evidence type="ECO:0000303" key="6">
    <source>
    </source>
</evidence>
<evidence type="ECO:0000305" key="7"/>
<evidence type="ECO:0000305" key="8">
    <source>
    </source>
</evidence>
<evidence type="ECO:0007829" key="9">
    <source>
        <dbReference type="PDB" id="2WBI"/>
    </source>
</evidence>
<accession>Q709F0</accession>
<accession>Q08AF0</accession>
<accession>Q658N9</accession>
<accession>Q658Y2</accession>
<accession>Q6ZND2</accession>
<accession>Q8WUT6</accession>
<accession>Q9H9R3</accession>
<reference key="1">
    <citation type="submission" date="2003-11" db="EMBL/GenBank/DDBJ databases">
        <title>Presence of an acyl-CoA dehydrogenase in mammalian peroxisomes ?</title>
        <authorList>
            <person name="Mahieu V."/>
            <person name="Van Veldhoven P.P."/>
        </authorList>
    </citation>
    <scope>NUCLEOTIDE SEQUENCE [MRNA] (ISOFORM 1)</scope>
</reference>
<reference key="2">
    <citation type="journal article" date="2007" name="BMC Genomics">
        <title>The full-ORF clone resource of the German cDNA consortium.</title>
        <authorList>
            <person name="Bechtel S."/>
            <person name="Rosenfelder H."/>
            <person name="Duda A."/>
            <person name="Schmidt C.P."/>
            <person name="Ernst U."/>
            <person name="Wellenreuther R."/>
            <person name="Mehrle A."/>
            <person name="Schuster C."/>
            <person name="Bahr A."/>
            <person name="Bloecker H."/>
            <person name="Heubner D."/>
            <person name="Hoerlein A."/>
            <person name="Michel G."/>
            <person name="Wedler H."/>
            <person name="Koehrer K."/>
            <person name="Ottenwaelder B."/>
            <person name="Poustka A."/>
            <person name="Wiemann S."/>
            <person name="Schupp I."/>
        </authorList>
    </citation>
    <scope>NUCLEOTIDE SEQUENCE [LARGE SCALE MRNA] (ISOFORM 2)</scope>
    <scope>NUCLEOTIDE SEQUENCE [LARGE SCALE MRNA] OF 35-780 (ISOFORM 1)</scope>
    <source>
        <tissue>Lymph node</tissue>
        <tissue>Stomach</tissue>
    </source>
</reference>
<reference key="3">
    <citation type="journal article" date="2004" name="Nat. Genet.">
        <title>Complete sequencing and characterization of 21,243 full-length human cDNAs.</title>
        <authorList>
            <person name="Ota T."/>
            <person name="Suzuki Y."/>
            <person name="Nishikawa T."/>
            <person name="Otsuki T."/>
            <person name="Sugiyama T."/>
            <person name="Irie R."/>
            <person name="Wakamatsu A."/>
            <person name="Hayashi K."/>
            <person name="Sato H."/>
            <person name="Nagai K."/>
            <person name="Kimura K."/>
            <person name="Makita H."/>
            <person name="Sekine M."/>
            <person name="Obayashi M."/>
            <person name="Nishi T."/>
            <person name="Shibahara T."/>
            <person name="Tanaka T."/>
            <person name="Ishii S."/>
            <person name="Yamamoto J."/>
            <person name="Saito K."/>
            <person name="Kawai Y."/>
            <person name="Isono Y."/>
            <person name="Nakamura Y."/>
            <person name="Nagahari K."/>
            <person name="Murakami K."/>
            <person name="Yasuda T."/>
            <person name="Iwayanagi T."/>
            <person name="Wagatsuma M."/>
            <person name="Shiratori A."/>
            <person name="Sudo H."/>
            <person name="Hosoiri T."/>
            <person name="Kaku Y."/>
            <person name="Kodaira H."/>
            <person name="Kondo H."/>
            <person name="Sugawara M."/>
            <person name="Takahashi M."/>
            <person name="Kanda K."/>
            <person name="Yokoi T."/>
            <person name="Furuya T."/>
            <person name="Kikkawa E."/>
            <person name="Omura Y."/>
            <person name="Abe K."/>
            <person name="Kamihara K."/>
            <person name="Katsuta N."/>
            <person name="Sato K."/>
            <person name="Tanikawa M."/>
            <person name="Yamazaki M."/>
            <person name="Ninomiya K."/>
            <person name="Ishibashi T."/>
            <person name="Yamashita H."/>
            <person name="Murakawa K."/>
            <person name="Fujimori K."/>
            <person name="Tanai H."/>
            <person name="Kimata M."/>
            <person name="Watanabe M."/>
            <person name="Hiraoka S."/>
            <person name="Chiba Y."/>
            <person name="Ishida S."/>
            <person name="Ono Y."/>
            <person name="Takiguchi S."/>
            <person name="Watanabe S."/>
            <person name="Yosida M."/>
            <person name="Hotuta T."/>
            <person name="Kusano J."/>
            <person name="Kanehori K."/>
            <person name="Takahashi-Fujii A."/>
            <person name="Hara H."/>
            <person name="Tanase T.-O."/>
            <person name="Nomura Y."/>
            <person name="Togiya S."/>
            <person name="Komai F."/>
            <person name="Hara R."/>
            <person name="Takeuchi K."/>
            <person name="Arita M."/>
            <person name="Imose N."/>
            <person name="Musashino K."/>
            <person name="Yuuki H."/>
            <person name="Oshima A."/>
            <person name="Sasaki N."/>
            <person name="Aotsuka S."/>
            <person name="Yoshikawa Y."/>
            <person name="Matsunawa H."/>
            <person name="Ichihara T."/>
            <person name="Shiohata N."/>
            <person name="Sano S."/>
            <person name="Moriya S."/>
            <person name="Momiyama H."/>
            <person name="Satoh N."/>
            <person name="Takami S."/>
            <person name="Terashima Y."/>
            <person name="Suzuki O."/>
            <person name="Nakagawa S."/>
            <person name="Senoh A."/>
            <person name="Mizoguchi H."/>
            <person name="Goto Y."/>
            <person name="Shimizu F."/>
            <person name="Wakebe H."/>
            <person name="Hishigaki H."/>
            <person name="Watanabe T."/>
            <person name="Sugiyama A."/>
            <person name="Takemoto M."/>
            <person name="Kawakami B."/>
            <person name="Yamazaki M."/>
            <person name="Watanabe K."/>
            <person name="Kumagai A."/>
            <person name="Itakura S."/>
            <person name="Fukuzumi Y."/>
            <person name="Fujimori Y."/>
            <person name="Komiyama M."/>
            <person name="Tashiro H."/>
            <person name="Tanigami A."/>
            <person name="Fujiwara T."/>
            <person name="Ono T."/>
            <person name="Yamada K."/>
            <person name="Fujii Y."/>
            <person name="Ozaki K."/>
            <person name="Hirao M."/>
            <person name="Ohmori Y."/>
            <person name="Kawabata A."/>
            <person name="Hikiji T."/>
            <person name="Kobatake N."/>
            <person name="Inagaki H."/>
            <person name="Ikema Y."/>
            <person name="Okamoto S."/>
            <person name="Okitani R."/>
            <person name="Kawakami T."/>
            <person name="Noguchi S."/>
            <person name="Itoh T."/>
            <person name="Shigeta K."/>
            <person name="Senba T."/>
            <person name="Matsumura K."/>
            <person name="Nakajima Y."/>
            <person name="Mizuno T."/>
            <person name="Morinaga M."/>
            <person name="Sasaki M."/>
            <person name="Togashi T."/>
            <person name="Oyama M."/>
            <person name="Hata H."/>
            <person name="Watanabe M."/>
            <person name="Komatsu T."/>
            <person name="Mizushima-Sugano J."/>
            <person name="Satoh T."/>
            <person name="Shirai Y."/>
            <person name="Takahashi Y."/>
            <person name="Nakagawa K."/>
            <person name="Okumura K."/>
            <person name="Nagase T."/>
            <person name="Nomura N."/>
            <person name="Kikuchi H."/>
            <person name="Masuho Y."/>
            <person name="Yamashita R."/>
            <person name="Nakai K."/>
            <person name="Yada T."/>
            <person name="Nakamura Y."/>
            <person name="Ohara O."/>
            <person name="Isogai T."/>
            <person name="Sugano S."/>
        </authorList>
    </citation>
    <scope>NUCLEOTIDE SEQUENCE [LARGE SCALE MRNA] OF 1-563 (ISOFORM 3)</scope>
    <scope>NUCLEOTIDE SEQUENCE [LARGE SCALE MRNA] OF 343-780 (ISOFORM 1)</scope>
    <source>
        <tissue>Tongue</tissue>
    </source>
</reference>
<reference key="4">
    <citation type="journal article" date="2006" name="Nature">
        <title>The DNA sequence, annotation and analysis of human chromosome 3.</title>
        <authorList>
            <person name="Muzny D.M."/>
            <person name="Scherer S.E."/>
            <person name="Kaul R."/>
            <person name="Wang J."/>
            <person name="Yu J."/>
            <person name="Sudbrak R."/>
            <person name="Buhay C.J."/>
            <person name="Chen R."/>
            <person name="Cree A."/>
            <person name="Ding Y."/>
            <person name="Dugan-Rocha S."/>
            <person name="Gill R."/>
            <person name="Gunaratne P."/>
            <person name="Harris R.A."/>
            <person name="Hawes A.C."/>
            <person name="Hernandez J."/>
            <person name="Hodgson A.V."/>
            <person name="Hume J."/>
            <person name="Jackson A."/>
            <person name="Khan Z.M."/>
            <person name="Kovar-Smith C."/>
            <person name="Lewis L.R."/>
            <person name="Lozado R.J."/>
            <person name="Metzker M.L."/>
            <person name="Milosavljevic A."/>
            <person name="Miner G.R."/>
            <person name="Morgan M.B."/>
            <person name="Nazareth L.V."/>
            <person name="Scott G."/>
            <person name="Sodergren E."/>
            <person name="Song X.-Z."/>
            <person name="Steffen D."/>
            <person name="Wei S."/>
            <person name="Wheeler D.A."/>
            <person name="Wright M.W."/>
            <person name="Worley K.C."/>
            <person name="Yuan Y."/>
            <person name="Zhang Z."/>
            <person name="Adams C.Q."/>
            <person name="Ansari-Lari M.A."/>
            <person name="Ayele M."/>
            <person name="Brown M.J."/>
            <person name="Chen G."/>
            <person name="Chen Z."/>
            <person name="Clendenning J."/>
            <person name="Clerc-Blankenburg K.P."/>
            <person name="Chen R."/>
            <person name="Chen Z."/>
            <person name="Davis C."/>
            <person name="Delgado O."/>
            <person name="Dinh H.H."/>
            <person name="Dong W."/>
            <person name="Draper H."/>
            <person name="Ernst S."/>
            <person name="Fu G."/>
            <person name="Gonzalez-Garay M.L."/>
            <person name="Garcia D.K."/>
            <person name="Gillett W."/>
            <person name="Gu J."/>
            <person name="Hao B."/>
            <person name="Haugen E."/>
            <person name="Havlak P."/>
            <person name="He X."/>
            <person name="Hennig S."/>
            <person name="Hu S."/>
            <person name="Huang W."/>
            <person name="Jackson L.R."/>
            <person name="Jacob L.S."/>
            <person name="Kelly S.H."/>
            <person name="Kube M."/>
            <person name="Levy R."/>
            <person name="Li Z."/>
            <person name="Liu B."/>
            <person name="Liu J."/>
            <person name="Liu W."/>
            <person name="Lu J."/>
            <person name="Maheshwari M."/>
            <person name="Nguyen B.-V."/>
            <person name="Okwuonu G.O."/>
            <person name="Palmeiri A."/>
            <person name="Pasternak S."/>
            <person name="Perez L.M."/>
            <person name="Phelps K.A."/>
            <person name="Plopper F.J."/>
            <person name="Qiang B."/>
            <person name="Raymond C."/>
            <person name="Rodriguez R."/>
            <person name="Saenphimmachak C."/>
            <person name="Santibanez J."/>
            <person name="Shen H."/>
            <person name="Shen Y."/>
            <person name="Subramanian S."/>
            <person name="Tabor P.E."/>
            <person name="Verduzco D."/>
            <person name="Waldron L."/>
            <person name="Wang J."/>
            <person name="Wang J."/>
            <person name="Wang Q."/>
            <person name="Williams G.A."/>
            <person name="Wong G.K.-S."/>
            <person name="Yao Z."/>
            <person name="Zhang J."/>
            <person name="Zhang X."/>
            <person name="Zhao G."/>
            <person name="Zhou J."/>
            <person name="Zhou Y."/>
            <person name="Nelson D."/>
            <person name="Lehrach H."/>
            <person name="Reinhardt R."/>
            <person name="Naylor S.L."/>
            <person name="Yang H."/>
            <person name="Olson M."/>
            <person name="Weinstock G."/>
            <person name="Gibbs R.A."/>
        </authorList>
    </citation>
    <scope>NUCLEOTIDE SEQUENCE [LARGE SCALE GENOMIC DNA]</scope>
</reference>
<reference key="5">
    <citation type="journal article" date="2004" name="Genome Res.">
        <title>The status, quality, and expansion of the NIH full-length cDNA project: the Mammalian Gene Collection (MGC).</title>
        <authorList>
            <consortium name="The MGC Project Team"/>
        </authorList>
    </citation>
    <scope>NUCLEOTIDE SEQUENCE [LARGE SCALE MRNA] (ISOFORM 1)</scope>
    <source>
        <tissue>Cervix</tissue>
    </source>
</reference>
<reference key="6">
    <citation type="journal article" date="2011" name="BMC Syst. Biol.">
        <title>Initial characterization of the human central proteome.</title>
        <authorList>
            <person name="Burkard T.R."/>
            <person name="Planyavsky M."/>
            <person name="Kaupe I."/>
            <person name="Breitwieser F.P."/>
            <person name="Buerckstuemmer T."/>
            <person name="Bennett K.L."/>
            <person name="Superti-Furga G."/>
            <person name="Colinge J."/>
        </authorList>
    </citation>
    <scope>IDENTIFICATION BY MASS SPECTROMETRY [LARGE SCALE ANALYSIS]</scope>
</reference>
<reference key="7">
    <citation type="journal article" date="2011" name="Mol. Genet. Metab.">
        <title>Identification and characterization of new long chain acyl-CoA dehydrogenases.</title>
        <authorList>
            <person name="He M."/>
            <person name="Pei Z."/>
            <person name="Mohsen A.W."/>
            <person name="Watkins P."/>
            <person name="Murdoch G."/>
            <person name="Van Veldhoven P.P."/>
            <person name="Ensenauer R."/>
            <person name="Vockley J."/>
        </authorList>
    </citation>
    <scope>FUNCTION</scope>
    <scope>CATALYTIC ACTIVITY</scope>
    <scope>PATHWAY</scope>
    <scope>SUBCELLULAR LOCATION</scope>
    <scope>TISSUE SPECIFICITY</scope>
</reference>
<reference key="8">
    <citation type="journal article" date="2014" name="J. Proteomics">
        <title>An enzyme assisted RP-RPLC approach for in-depth analysis of human liver phosphoproteome.</title>
        <authorList>
            <person name="Bian Y."/>
            <person name="Song C."/>
            <person name="Cheng K."/>
            <person name="Dong M."/>
            <person name="Wang F."/>
            <person name="Huang J."/>
            <person name="Sun D."/>
            <person name="Wang L."/>
            <person name="Ye M."/>
            <person name="Zou H."/>
        </authorList>
    </citation>
    <scope>IDENTIFICATION BY MASS SPECTROMETRY [LARGE SCALE ANALYSIS]</scope>
    <source>
        <tissue>Liver</tissue>
    </source>
</reference>
<reference key="9">
    <citation type="submission" date="2009-05" db="PDB data bank">
        <title>Crystal structure of human acyl-CoA dehydrogenase 11.</title>
        <authorList>
            <consortium name="Structural genomics consortium (SGC)"/>
        </authorList>
    </citation>
    <scope>X-RAY CRYSTALLOGRAPHY (2.8 ANGSTROMS) OF 355-780 IN COMPLEX WITH FAD</scope>
    <scope>COFACTOR</scope>
    <scope>SUBUNIT</scope>
</reference>
<sequence length="780" mass="87264">MKPGATGESDLAEVLPQHKFDSKSLEAYLNQHLSGFGAEREATLTIAQYRAGKSNPTFYLQKGFQTYVLRKKPPGSLLPKAHQIDREFKVQKALFSIGFPVPKPILYCSDTSVIGTEFYVMEHVQGRIFRDLTIPGLSPAERSAIYVATVETLAQLHSLNIQSLQLEGYGIGAGYCKRQVSTWTKQYQAAAHQDIPAMQQLSEWLMKNLPDNDNEENLIHGDFRLDNIVFHPKECRVIAVLDWELSTIGHPLSDLAHFSLFYFWPRTVPMINQGSYSENSGIPSMEELISIYCRCRGINSILPNWNFFLALSYFKMAGIAQGVYSRYLLGNNSSEDSFLFANIVQPLAETGLQLSKRTFSTVLPQIDTTGQLFVQTRKGQEVLIKVKHFMKQHILPAEKEVTEFYVQNENSVDKWGKPLVIDKLKEMAKVEGLWNLFLPAVSGLSHVDYALIAEETGKCFFAPDVFNCQAPDTGNMEVLHLYGSEEQKKQWLEPLLQGNITSCFCMTEPDVASSDATNIECSIQRDEDSYVINGKKWWSSGAGNPKCKIAIVLGRTQNTSLSRHKQHSMILVPMNTPGVKIIRPLSVFGYTDNFHGGHFEIHFNQVRVPATNLILGEGRGFEISQGRLGPGRIHHCMRTVGLAERALQIMCERATQRIAFKKKLYAHEVVAHWIAESRIAIEKIRLLTLKAAHSMDTLGSAGAKKEIAMIKVAAPRAVSKIVDWAIQVCGGAGVSQDYPLANMYAITRVLRLADGPDEVHLSAIATMELRDQAKRLTAKI</sequence>
<protein>
    <recommendedName>
        <fullName>Acyl-CoA dehydrogenase family member 11</fullName>
        <shortName>ACAD-11</shortName>
        <ecNumber evidence="3">1.3.8.-</ecNumber>
    </recommendedName>
</protein>
<organism>
    <name type="scientific">Homo sapiens</name>
    <name type="common">Human</name>
    <dbReference type="NCBI Taxonomy" id="9606"/>
    <lineage>
        <taxon>Eukaryota</taxon>
        <taxon>Metazoa</taxon>
        <taxon>Chordata</taxon>
        <taxon>Craniata</taxon>
        <taxon>Vertebrata</taxon>
        <taxon>Euteleostomi</taxon>
        <taxon>Mammalia</taxon>
        <taxon>Eutheria</taxon>
        <taxon>Euarchontoglires</taxon>
        <taxon>Primates</taxon>
        <taxon>Haplorrhini</taxon>
        <taxon>Catarrhini</taxon>
        <taxon>Hominidae</taxon>
        <taxon>Homo</taxon>
    </lineage>
</organism>
<comment type="function">
    <text evidence="3 8">Acyl-CoA dehydrogenase, that exhibits maximal activity towards saturated C22-CoA (PubMed:21237683). Probably participates in beta-oxydation and energy production but could also play a role in the metabolism of specific fatty acids to control fatty acids composition of cellular lipids in brain (Probable).</text>
</comment>
<comment type="catalytic activity">
    <reaction evidence="3">
        <text>a 2,3-saturated acyl-CoA + oxidized [electron-transfer flavoprotein] + H(+) = a (2E)-enoyl-CoA + reduced [electron-transfer flavoprotein]</text>
        <dbReference type="Rhea" id="RHEA:44704"/>
        <dbReference type="Rhea" id="RHEA-COMP:10685"/>
        <dbReference type="Rhea" id="RHEA-COMP:10686"/>
        <dbReference type="ChEBI" id="CHEBI:15378"/>
        <dbReference type="ChEBI" id="CHEBI:57692"/>
        <dbReference type="ChEBI" id="CHEBI:58307"/>
        <dbReference type="ChEBI" id="CHEBI:58856"/>
        <dbReference type="ChEBI" id="CHEBI:65111"/>
    </reaction>
    <physiologicalReaction direction="left-to-right" evidence="8">
        <dbReference type="Rhea" id="RHEA:44705"/>
    </physiologicalReaction>
</comment>
<comment type="catalytic activity">
    <reaction evidence="3">
        <text>docosanoyl-CoA + oxidized [electron-transfer flavoprotein] + H(+) = (2E)-docosenoyl-CoA + reduced [electron-transfer flavoprotein]</text>
        <dbReference type="Rhea" id="RHEA:47228"/>
        <dbReference type="Rhea" id="RHEA-COMP:10685"/>
        <dbReference type="Rhea" id="RHEA-COMP:10686"/>
        <dbReference type="ChEBI" id="CHEBI:15378"/>
        <dbReference type="ChEBI" id="CHEBI:57692"/>
        <dbReference type="ChEBI" id="CHEBI:58307"/>
        <dbReference type="ChEBI" id="CHEBI:65059"/>
        <dbReference type="ChEBI" id="CHEBI:74692"/>
    </reaction>
    <physiologicalReaction direction="left-to-right" evidence="8">
        <dbReference type="Rhea" id="RHEA:47229"/>
    </physiologicalReaction>
</comment>
<comment type="catalytic activity">
    <reaction evidence="3">
        <text>tetracosanoyl-CoA + oxidized [electron-transfer flavoprotein] + H(+) = (2E)-tetracosenoyl-CoA + reduced [electron-transfer flavoprotein]</text>
        <dbReference type="Rhea" id="RHEA:47232"/>
        <dbReference type="Rhea" id="RHEA-COMP:10685"/>
        <dbReference type="Rhea" id="RHEA-COMP:10686"/>
        <dbReference type="ChEBI" id="CHEBI:15378"/>
        <dbReference type="ChEBI" id="CHEBI:57692"/>
        <dbReference type="ChEBI" id="CHEBI:58307"/>
        <dbReference type="ChEBI" id="CHEBI:65052"/>
        <dbReference type="ChEBI" id="CHEBI:74693"/>
    </reaction>
    <physiologicalReaction direction="left-to-right" evidence="8">
        <dbReference type="Rhea" id="RHEA:47233"/>
    </physiologicalReaction>
</comment>
<comment type="catalytic activity">
    <reaction evidence="3">
        <text>eicosanoyl-CoA + oxidized [electron-transfer flavoprotein] + H(+) = (2E)-eicosenoyl-CoA + reduced [electron-transfer flavoprotein]</text>
        <dbReference type="Rhea" id="RHEA:47236"/>
        <dbReference type="Rhea" id="RHEA-COMP:10685"/>
        <dbReference type="Rhea" id="RHEA-COMP:10686"/>
        <dbReference type="ChEBI" id="CHEBI:15378"/>
        <dbReference type="ChEBI" id="CHEBI:57380"/>
        <dbReference type="ChEBI" id="CHEBI:57692"/>
        <dbReference type="ChEBI" id="CHEBI:58307"/>
        <dbReference type="ChEBI" id="CHEBI:74691"/>
    </reaction>
    <physiologicalReaction direction="left-to-right" evidence="8">
        <dbReference type="Rhea" id="RHEA:47237"/>
    </physiologicalReaction>
</comment>
<comment type="catalytic activity">
    <reaction evidence="3">
        <text>hexacosanoyl-CoA + oxidized [electron-transfer flavoprotein] + H(+) = (2E)-hexacosenoyl-CoA + reduced [electron-transfer flavoprotein]</text>
        <dbReference type="Rhea" id="RHEA:48216"/>
        <dbReference type="Rhea" id="RHEA-COMP:10685"/>
        <dbReference type="Rhea" id="RHEA-COMP:10686"/>
        <dbReference type="ChEBI" id="CHEBI:15378"/>
        <dbReference type="ChEBI" id="CHEBI:57692"/>
        <dbReference type="ChEBI" id="CHEBI:58307"/>
        <dbReference type="ChEBI" id="CHEBI:64868"/>
        <dbReference type="ChEBI" id="CHEBI:74281"/>
    </reaction>
    <physiologicalReaction direction="left-to-right" evidence="8">
        <dbReference type="Rhea" id="RHEA:48217"/>
    </physiologicalReaction>
</comment>
<comment type="catalytic activity">
    <reaction evidence="3">
        <text>tricosanoyl-CoA + oxidized [electron-transfer flavoprotein] + H(+) = (2E)-tricosenoyl-CoA + reduced [electron-transfer flavoprotein]</text>
        <dbReference type="Rhea" id="RHEA:48220"/>
        <dbReference type="Rhea" id="RHEA-COMP:10685"/>
        <dbReference type="Rhea" id="RHEA-COMP:10686"/>
        <dbReference type="ChEBI" id="CHEBI:15378"/>
        <dbReference type="ChEBI" id="CHEBI:57692"/>
        <dbReference type="ChEBI" id="CHEBI:58307"/>
        <dbReference type="ChEBI" id="CHEBI:90118"/>
        <dbReference type="ChEBI" id="CHEBI:90119"/>
    </reaction>
    <physiologicalReaction direction="left-to-right" evidence="8">
        <dbReference type="Rhea" id="RHEA:48221"/>
    </physiologicalReaction>
</comment>
<comment type="cofactor">
    <cofactor evidence="4">
        <name>FAD</name>
        <dbReference type="ChEBI" id="CHEBI:57692"/>
    </cofactor>
</comment>
<comment type="pathway">
    <text evidence="8">Lipid metabolism; fatty acid beta-oxidation.</text>
</comment>
<comment type="subunit">
    <text evidence="4">Homodimer.</text>
</comment>
<comment type="interaction">
    <interactant intactId="EBI-2880718">
        <id>Q709F0</id>
    </interactant>
    <interactant intactId="EBI-768015">
        <id>O95400</id>
        <label>CD2BP2</label>
    </interactant>
    <organismsDiffer>false</organismsDiffer>
    <experiments>7</experiments>
</comment>
<comment type="subcellular location">
    <subcellularLocation>
        <location evidence="2">Peroxisome</location>
    </subcellularLocation>
    <subcellularLocation>
        <location evidence="3">Mitochondrion membrane</location>
    </subcellularLocation>
    <text evidence="3">Has been detected associated with mitochondrial membrane, but no matrix, in kidney and cerebellum, as well as in a neuroblastoma cell line, but not in skin fibroblasts, where it is observed in cytoplasmic vesicles (PubMed:21237683). No mitochondrial targeting signals could be predicted for any known isoform, including a putative isoform starting at Met-316.</text>
</comment>
<comment type="alternative products">
    <event type="alternative splicing"/>
    <isoform>
        <id>Q709F0-1</id>
        <name>1</name>
        <sequence type="displayed"/>
    </isoform>
    <isoform>
        <id>Q709F0-2</id>
        <name>2</name>
        <sequence type="described" ref="VSP_021188"/>
    </isoform>
    <isoform>
        <id>Q709F0-3</id>
        <name>3</name>
        <sequence type="described" ref="VSP_021187"/>
    </isoform>
</comment>
<comment type="tissue specificity">
    <text evidence="3">Widely expressed with highest levels in brain followed by liver, heart and kidney.</text>
</comment>
<comment type="similarity">
    <text evidence="7">Belongs to the acyl-CoA dehydrogenase family.</text>
</comment>
<comment type="sequence caution" evidence="7">
    <conflict type="erroneous initiation">
        <sequence resource="EMBL-CDS" id="BAB14158"/>
    </conflict>
    <text>Truncated N-terminus.</text>
</comment>